<gene>
    <name evidence="1" type="primary">rny</name>
    <name type="ordered locus">M6_Spy1388</name>
</gene>
<protein>
    <recommendedName>
        <fullName evidence="1">Ribonuclease Y</fullName>
        <shortName evidence="1">RNase Y</shortName>
        <ecNumber evidence="1">3.1.-.-</ecNumber>
    </recommendedName>
</protein>
<comment type="function">
    <text evidence="1">Endoribonuclease that initiates mRNA decay.</text>
</comment>
<comment type="subcellular location">
    <subcellularLocation>
        <location evidence="1">Cell membrane</location>
        <topology evidence="1">Single-pass membrane protein</topology>
    </subcellularLocation>
</comment>
<comment type="similarity">
    <text evidence="1">Belongs to the RNase Y family.</text>
</comment>
<reference key="1">
    <citation type="journal article" date="2004" name="J. Infect. Dis.">
        <title>Progress toward characterization of the group A Streptococcus metagenome: complete genome sequence of a macrolide-resistant serotype M6 strain.</title>
        <authorList>
            <person name="Banks D.J."/>
            <person name="Porcella S.F."/>
            <person name="Barbian K.D."/>
            <person name="Beres S.B."/>
            <person name="Philips L.E."/>
            <person name="Voyich J.M."/>
            <person name="DeLeo F.R."/>
            <person name="Martin J.M."/>
            <person name="Somerville G.A."/>
            <person name="Musser J.M."/>
        </authorList>
    </citation>
    <scope>NUCLEOTIDE SEQUENCE [LARGE SCALE GENOMIC DNA]</scope>
    <source>
        <strain>ATCC BAA-946 / MGAS10394</strain>
    </source>
</reference>
<feature type="chain" id="PRO_0000163801" description="Ribonuclease Y">
    <location>
        <begin position="1"/>
        <end position="535"/>
    </location>
</feature>
<feature type="transmembrane region" description="Helical" evidence="1">
    <location>
        <begin position="4"/>
        <end position="24"/>
    </location>
</feature>
<feature type="domain" description="KH" evidence="1">
    <location>
        <begin position="225"/>
        <end position="285"/>
    </location>
</feature>
<feature type="domain" description="HD" evidence="2">
    <location>
        <begin position="351"/>
        <end position="444"/>
    </location>
</feature>
<feature type="region of interest" description="Disordered" evidence="3">
    <location>
        <begin position="118"/>
        <end position="141"/>
    </location>
</feature>
<dbReference type="EC" id="3.1.-.-" evidence="1"/>
<dbReference type="EMBL" id="CP000003">
    <property type="protein sequence ID" value="AAT87523.1"/>
    <property type="molecule type" value="Genomic_DNA"/>
</dbReference>
<dbReference type="RefSeq" id="WP_002988954.1">
    <property type="nucleotide sequence ID" value="NC_006086.1"/>
</dbReference>
<dbReference type="SMR" id="Q5XAP0"/>
<dbReference type="KEGG" id="spa:M6_Spy1388"/>
<dbReference type="HOGENOM" id="CLU_028328_1_0_9"/>
<dbReference type="Proteomes" id="UP000001167">
    <property type="component" value="Chromosome"/>
</dbReference>
<dbReference type="GO" id="GO:0005886">
    <property type="term" value="C:plasma membrane"/>
    <property type="evidence" value="ECO:0007669"/>
    <property type="project" value="UniProtKB-SubCell"/>
</dbReference>
<dbReference type="GO" id="GO:0003723">
    <property type="term" value="F:RNA binding"/>
    <property type="evidence" value="ECO:0007669"/>
    <property type="project" value="UniProtKB-UniRule"/>
</dbReference>
<dbReference type="GO" id="GO:0004521">
    <property type="term" value="F:RNA endonuclease activity"/>
    <property type="evidence" value="ECO:0007669"/>
    <property type="project" value="UniProtKB-UniRule"/>
</dbReference>
<dbReference type="GO" id="GO:0006402">
    <property type="term" value="P:mRNA catabolic process"/>
    <property type="evidence" value="ECO:0007669"/>
    <property type="project" value="UniProtKB-UniRule"/>
</dbReference>
<dbReference type="CDD" id="cd00077">
    <property type="entry name" value="HDc"/>
    <property type="match status" value="1"/>
</dbReference>
<dbReference type="CDD" id="cd22431">
    <property type="entry name" value="KH-I_RNaseY"/>
    <property type="match status" value="1"/>
</dbReference>
<dbReference type="FunFam" id="1.10.3210.10:FF:000003">
    <property type="entry name" value="Ribonuclease Y"/>
    <property type="match status" value="1"/>
</dbReference>
<dbReference type="Gene3D" id="1.10.3210.10">
    <property type="entry name" value="Hypothetical protein af1432"/>
    <property type="match status" value="1"/>
</dbReference>
<dbReference type="Gene3D" id="3.30.1370.10">
    <property type="entry name" value="K Homology domain, type 1"/>
    <property type="match status" value="1"/>
</dbReference>
<dbReference type="HAMAP" id="MF_00335">
    <property type="entry name" value="RNase_Y"/>
    <property type="match status" value="1"/>
</dbReference>
<dbReference type="InterPro" id="IPR003607">
    <property type="entry name" value="HD/PDEase_dom"/>
</dbReference>
<dbReference type="InterPro" id="IPR006674">
    <property type="entry name" value="HD_domain"/>
</dbReference>
<dbReference type="InterPro" id="IPR006675">
    <property type="entry name" value="HDIG_dom"/>
</dbReference>
<dbReference type="InterPro" id="IPR004087">
    <property type="entry name" value="KH_dom"/>
</dbReference>
<dbReference type="InterPro" id="IPR004088">
    <property type="entry name" value="KH_dom_type_1"/>
</dbReference>
<dbReference type="InterPro" id="IPR036612">
    <property type="entry name" value="KH_dom_type_1_sf"/>
</dbReference>
<dbReference type="InterPro" id="IPR017705">
    <property type="entry name" value="Ribonuclease_Y"/>
</dbReference>
<dbReference type="InterPro" id="IPR022711">
    <property type="entry name" value="RNase_Y_N"/>
</dbReference>
<dbReference type="NCBIfam" id="TIGR00277">
    <property type="entry name" value="HDIG"/>
    <property type="match status" value="1"/>
</dbReference>
<dbReference type="NCBIfam" id="NF000997">
    <property type="entry name" value="PRK00106.1"/>
    <property type="match status" value="1"/>
</dbReference>
<dbReference type="NCBIfam" id="TIGR03319">
    <property type="entry name" value="RNase_Y"/>
    <property type="match status" value="1"/>
</dbReference>
<dbReference type="PANTHER" id="PTHR12826">
    <property type="entry name" value="RIBONUCLEASE Y"/>
    <property type="match status" value="1"/>
</dbReference>
<dbReference type="PANTHER" id="PTHR12826:SF15">
    <property type="entry name" value="RIBONUCLEASE Y"/>
    <property type="match status" value="1"/>
</dbReference>
<dbReference type="Pfam" id="PF01966">
    <property type="entry name" value="HD"/>
    <property type="match status" value="1"/>
</dbReference>
<dbReference type="Pfam" id="PF00013">
    <property type="entry name" value="KH_1"/>
    <property type="match status" value="1"/>
</dbReference>
<dbReference type="Pfam" id="PF12072">
    <property type="entry name" value="RNase_Y_N"/>
    <property type="match status" value="1"/>
</dbReference>
<dbReference type="SMART" id="SM00471">
    <property type="entry name" value="HDc"/>
    <property type="match status" value="1"/>
</dbReference>
<dbReference type="SMART" id="SM00322">
    <property type="entry name" value="KH"/>
    <property type="match status" value="1"/>
</dbReference>
<dbReference type="SUPFAM" id="SSF54791">
    <property type="entry name" value="Eukaryotic type KH-domain (KH-domain type I)"/>
    <property type="match status" value="1"/>
</dbReference>
<dbReference type="SUPFAM" id="SSF109604">
    <property type="entry name" value="HD-domain/PDEase-like"/>
    <property type="match status" value="1"/>
</dbReference>
<dbReference type="PROSITE" id="PS51831">
    <property type="entry name" value="HD"/>
    <property type="match status" value="1"/>
</dbReference>
<dbReference type="PROSITE" id="PS50084">
    <property type="entry name" value="KH_TYPE_1"/>
    <property type="match status" value="1"/>
</dbReference>
<accession>Q5XAP0</accession>
<evidence type="ECO:0000255" key="1">
    <source>
        <dbReference type="HAMAP-Rule" id="MF_00335"/>
    </source>
</evidence>
<evidence type="ECO:0000255" key="2">
    <source>
        <dbReference type="PROSITE-ProRule" id="PRU01175"/>
    </source>
</evidence>
<evidence type="ECO:0000256" key="3">
    <source>
        <dbReference type="SAM" id="MobiDB-lite"/>
    </source>
</evidence>
<name>RNY_STRP6</name>
<keyword id="KW-1003">Cell membrane</keyword>
<keyword id="KW-0255">Endonuclease</keyword>
<keyword id="KW-0378">Hydrolase</keyword>
<keyword id="KW-0472">Membrane</keyword>
<keyword id="KW-0540">Nuclease</keyword>
<keyword id="KW-0694">RNA-binding</keyword>
<keyword id="KW-0812">Transmembrane</keyword>
<keyword id="KW-1133">Transmembrane helix</keyword>
<organism>
    <name type="scientific">Streptococcus pyogenes serotype M6 (strain ATCC BAA-946 / MGAS10394)</name>
    <dbReference type="NCBI Taxonomy" id="286636"/>
    <lineage>
        <taxon>Bacteria</taxon>
        <taxon>Bacillati</taxon>
        <taxon>Bacillota</taxon>
        <taxon>Bacilli</taxon>
        <taxon>Lactobacillales</taxon>
        <taxon>Streptococcaceae</taxon>
        <taxon>Streptococcus</taxon>
    </lineage>
</organism>
<sequence>MVNIILLIVSALIGLILGYALISIRLKSAKEAAELTLLNAEQEAVDIRGKAEVDAEHIKKTAKRESKANRKELLLEAKEEARKYREEIEQEFKSERQELKQLETRLAERSLTLDRKDENLSSKEKVLDSKEQSLTDKSKHIDERQLQVEKLEEEKKAELEKVAAMTIAEAREVILMETENKLTHEIATRIRDAERDIKDRTVKTAKDLLAQAMQRLAGEYVTEQTITSVHLPDDNMKGRIIGREGRNIRTLESLTGIDVIIDDTPEVVILSGFDPIRREIARMTLESLIADGRIHPARIEELVEKNRLEMDNRIREYGEAAAYEIGAPNLHPDLIKIMGRLQFRTSFGQNVLRHSVEVGKLAGILAGELGENVALARRAGFLHDMGKAIDREVEGSHVEIGMEFARKYKEHPVVVNTIASHHGDVEPDSVIAVLVAAADALSSARPGARNESMENYIKRLRDLEEIATSFDGVQNSFALQAGREIRIMVQPEKISDDQVVILSHKVREKIENNLDYPGNIKVTVIREMRAVDYAK</sequence>
<proteinExistence type="inferred from homology"/>